<sequence length="553" mass="57709">MDYNVKDFGALGDGVSDDRASIQAAIDAAYAAGGGTVYLPAGEYRVSAAGEPGDGCLMLKDGVYLAGAGMGETVIKLIDGSDQKITGMVRSAYGEETSNFGMRDLTLDGNRDNTSGKVDGWFNGYIPGGDGADRDVTIERVEVREMSGYGFDPHEQTINLTIRDSVAHDNGLDGFVADYLVDSVFENNVAYANDRHGFNVVTSTHDFVMTNNVAYGNGSSGLVVQRGLEDLALPSNILIDGGAYYDNAREGVLLKMTSDITLQNADIHGNGSSGVRVYGAQDVQILDNQIHDNAQAAAVPEVLLQSFDDTAGASGTYYTTLNTRIEGNTISGSANSTYGIQERNDGTDYSSLIDNDIAGVQQPIQLYGPHSTVSGEPGATPQQPSTGSDGEPLVGGDTDDQLQGGSGADRLDGGAGDDILDGGAGRDRLSGGAGADTFVFSAREDSYRTDTAVFNDLILDFEASEDRIDLSALGFSGLGDGYGGTLLLKTNAEGTRTYLKSFEADAEGRRFEVALDGDHTGDLSAANVVFAATGTTTELEVLGDSGTQAGAIV</sequence>
<gene>
    <name evidence="4" type="primary">algE4</name>
</gene>
<proteinExistence type="evidence at protein level"/>
<protein>
    <recommendedName>
        <fullName evidence="5">Mannuronan C5-epimerase AlgE4</fullName>
        <ecNumber evidence="3">5.1.3.37</ecNumber>
    </recommendedName>
    <alternativeName>
        <fullName>Poly(beta-D-mannuronate) C5 epimerase 4</fullName>
    </alternativeName>
</protein>
<accession>Q44493</accession>
<keyword id="KW-0002">3D-structure</keyword>
<keyword id="KW-0016">Alginate biosynthesis</keyword>
<keyword id="KW-0106">Calcium</keyword>
<keyword id="KW-0413">Isomerase</keyword>
<keyword id="KW-0677">Repeat</keyword>
<keyword id="KW-0964">Secreted</keyword>
<dbReference type="EC" id="5.1.3.37" evidence="3"/>
<dbReference type="EMBL" id="L39096">
    <property type="protein sequence ID" value="AAA87310.1"/>
    <property type="molecule type" value="Genomic_DNA"/>
</dbReference>
<dbReference type="PIR" id="S77623">
    <property type="entry name" value="S77623"/>
</dbReference>
<dbReference type="PDB" id="2AGM">
    <property type="method" value="NMR"/>
    <property type="chains" value="A=387-553"/>
</dbReference>
<dbReference type="PDB" id="2PYG">
    <property type="method" value="X-ray"/>
    <property type="resolution" value="2.10 A"/>
    <property type="chains" value="A/B=1-377"/>
</dbReference>
<dbReference type="PDB" id="2PYH">
    <property type="method" value="X-ray"/>
    <property type="resolution" value="2.70 A"/>
    <property type="chains" value="A/B=1-377"/>
</dbReference>
<dbReference type="PDBsum" id="2AGM"/>
<dbReference type="PDBsum" id="2PYG"/>
<dbReference type="PDBsum" id="2PYH"/>
<dbReference type="BMRB" id="Q44493"/>
<dbReference type="SMR" id="Q44493"/>
<dbReference type="BioCyc" id="MetaCyc:MONOMER-14389"/>
<dbReference type="BRENDA" id="5.1.3.37">
    <property type="organism ID" value="49"/>
</dbReference>
<dbReference type="UniPathway" id="UPA00286"/>
<dbReference type="EvolutionaryTrace" id="Q44493"/>
<dbReference type="GO" id="GO:0005615">
    <property type="term" value="C:extracellular space"/>
    <property type="evidence" value="ECO:0007669"/>
    <property type="project" value="InterPro"/>
</dbReference>
<dbReference type="GO" id="GO:0005509">
    <property type="term" value="F:calcium ion binding"/>
    <property type="evidence" value="ECO:0007669"/>
    <property type="project" value="InterPro"/>
</dbReference>
<dbReference type="GO" id="GO:0016853">
    <property type="term" value="F:isomerase activity"/>
    <property type="evidence" value="ECO:0007669"/>
    <property type="project" value="UniProtKB-KW"/>
</dbReference>
<dbReference type="GO" id="GO:0042121">
    <property type="term" value="P:alginic acid biosynthetic process"/>
    <property type="evidence" value="ECO:0007669"/>
    <property type="project" value="UniProtKB-UniPathway"/>
</dbReference>
<dbReference type="Gene3D" id="2.160.20.10">
    <property type="entry name" value="Single-stranded right-handed beta-helix, Pectin lyase-like"/>
    <property type="match status" value="1"/>
</dbReference>
<dbReference type="InterPro" id="IPR039448">
    <property type="entry name" value="Beta_helix"/>
</dbReference>
<dbReference type="InterPro" id="IPR006633">
    <property type="entry name" value="Carb-bd_sugar_hydrolysis-dom"/>
</dbReference>
<dbReference type="InterPro" id="IPR018511">
    <property type="entry name" value="Hemolysin-typ_Ca-bd_CS"/>
</dbReference>
<dbReference type="InterPro" id="IPR001343">
    <property type="entry name" value="Hemolysn_Ca-bd"/>
</dbReference>
<dbReference type="InterPro" id="IPR006626">
    <property type="entry name" value="PbH1"/>
</dbReference>
<dbReference type="InterPro" id="IPR012334">
    <property type="entry name" value="Pectin_lyas_fold"/>
</dbReference>
<dbReference type="InterPro" id="IPR011050">
    <property type="entry name" value="Pectin_lyase_fold/virulence"/>
</dbReference>
<dbReference type="InterPro" id="IPR013858">
    <property type="entry name" value="Peptidase_M10B_C"/>
</dbReference>
<dbReference type="InterPro" id="IPR024535">
    <property type="entry name" value="RHGA/B-epi-like_pectate_lyase"/>
</dbReference>
<dbReference type="InterPro" id="IPR051550">
    <property type="entry name" value="SCF-Subunits/Alg-Epimerases"/>
</dbReference>
<dbReference type="InterPro" id="IPR011049">
    <property type="entry name" value="Serralysin-like_metalloprot_C"/>
</dbReference>
<dbReference type="PANTHER" id="PTHR22990">
    <property type="entry name" value="F-BOX ONLY PROTEIN"/>
    <property type="match status" value="1"/>
</dbReference>
<dbReference type="PANTHER" id="PTHR22990:SF15">
    <property type="entry name" value="F-BOX ONLY PROTEIN 10"/>
    <property type="match status" value="1"/>
</dbReference>
<dbReference type="Pfam" id="PF13229">
    <property type="entry name" value="Beta_helix"/>
    <property type="match status" value="1"/>
</dbReference>
<dbReference type="Pfam" id="PF00353">
    <property type="entry name" value="HemolysinCabind"/>
    <property type="match status" value="1"/>
</dbReference>
<dbReference type="Pfam" id="PF12708">
    <property type="entry name" value="Pect-lyase_RHGA_epim"/>
    <property type="match status" value="1"/>
</dbReference>
<dbReference type="Pfam" id="PF08548">
    <property type="entry name" value="Peptidase_M10_C"/>
    <property type="match status" value="1"/>
</dbReference>
<dbReference type="PRINTS" id="PR00313">
    <property type="entry name" value="CABNDNGRPT"/>
</dbReference>
<dbReference type="SMART" id="SM00722">
    <property type="entry name" value="CASH"/>
    <property type="match status" value="2"/>
</dbReference>
<dbReference type="SMART" id="SM00710">
    <property type="entry name" value="PbH1"/>
    <property type="match status" value="8"/>
</dbReference>
<dbReference type="SUPFAM" id="SSF51120">
    <property type="entry name" value="beta-Roll"/>
    <property type="match status" value="1"/>
</dbReference>
<dbReference type="SUPFAM" id="SSF51126">
    <property type="entry name" value="Pectin lyase-like"/>
    <property type="match status" value="1"/>
</dbReference>
<dbReference type="PROSITE" id="PS00330">
    <property type="entry name" value="HEMOLYSIN_CALCIUM"/>
    <property type="match status" value="3"/>
</dbReference>
<name>ALGE4_AZOVI</name>
<feature type="chain" id="PRO_0000219558" description="Mannuronan C5-epimerase AlgE4">
    <location>
        <begin position="1"/>
        <end position="553"/>
    </location>
</feature>
<feature type="repeat" description="PbH1 1" evidence="1">
    <location>
        <begin position="133"/>
        <end position="155"/>
    </location>
</feature>
<feature type="repeat" description="PbH1 2" evidence="1">
    <location>
        <begin position="157"/>
        <end position="179"/>
    </location>
</feature>
<feature type="repeat" description="PbH1 3" evidence="1">
    <location>
        <begin position="180"/>
        <end position="202"/>
    </location>
</feature>
<feature type="repeat" description="PbH1 4" evidence="1">
    <location>
        <begin position="204"/>
        <end position="226"/>
    </location>
</feature>
<feature type="repeat" description="PbH1 5" evidence="1">
    <location>
        <begin position="234"/>
        <end position="256"/>
    </location>
</feature>
<feature type="repeat" description="PbH1 6" evidence="1">
    <location>
        <begin position="257"/>
        <end position="279"/>
    </location>
</feature>
<feature type="repeat" description="PbH1 7" evidence="1">
    <location>
        <begin position="280"/>
        <end position="301"/>
    </location>
</feature>
<feature type="repeat" description="PbH1 8" evidence="1">
    <location>
        <begin position="320"/>
        <end position="342"/>
    </location>
</feature>
<feature type="repeat" description="Hemolysin-type calcium-binding 1">
    <location>
        <begin position="403"/>
        <end position="420"/>
    </location>
</feature>
<feature type="repeat" description="Hemolysin-type calcium-binding 2">
    <location>
        <begin position="421"/>
        <end position="438"/>
    </location>
</feature>
<feature type="region of interest" description="Disordered" evidence="2">
    <location>
        <begin position="367"/>
        <end position="427"/>
    </location>
</feature>
<feature type="helix" evidence="7">
    <location>
        <begin position="5"/>
        <end position="8"/>
    </location>
</feature>
<feature type="strand" evidence="7">
    <location>
        <begin position="13"/>
        <end position="17"/>
    </location>
</feature>
<feature type="helix" evidence="7">
    <location>
        <begin position="19"/>
        <end position="31"/>
    </location>
</feature>
<feature type="strand" evidence="7">
    <location>
        <begin position="34"/>
        <end position="39"/>
    </location>
</feature>
<feature type="strand" evidence="7">
    <location>
        <begin position="41"/>
        <end position="46"/>
    </location>
</feature>
<feature type="helix" evidence="7">
    <location>
        <begin position="52"/>
        <end position="54"/>
    </location>
</feature>
<feature type="strand" evidence="7">
    <location>
        <begin position="56"/>
        <end position="58"/>
    </location>
</feature>
<feature type="strand" evidence="7">
    <location>
        <begin position="63"/>
        <end position="70"/>
    </location>
</feature>
<feature type="strand" evidence="7">
    <location>
        <begin position="73"/>
        <end position="77"/>
    </location>
</feature>
<feature type="strand" evidence="7">
    <location>
        <begin position="85"/>
        <end position="90"/>
    </location>
</feature>
<feature type="strand" evidence="7">
    <location>
        <begin position="98"/>
        <end position="108"/>
    </location>
</feature>
<feature type="helix" evidence="7">
    <location>
        <begin position="111"/>
        <end position="113"/>
    </location>
</feature>
<feature type="strand" evidence="7">
    <location>
        <begin position="118"/>
        <end position="123"/>
    </location>
</feature>
<feature type="strand" evidence="7">
    <location>
        <begin position="133"/>
        <end position="144"/>
    </location>
</feature>
<feature type="strand" evidence="7">
    <location>
        <begin position="150"/>
        <end position="153"/>
    </location>
</feature>
<feature type="strand" evidence="7">
    <location>
        <begin position="155"/>
        <end position="164"/>
    </location>
</feature>
<feature type="strand" evidence="7">
    <location>
        <begin position="166"/>
        <end position="169"/>
    </location>
</feature>
<feature type="strand" evidence="7">
    <location>
        <begin position="174"/>
        <end position="187"/>
    </location>
</feature>
<feature type="strand" evidence="7">
    <location>
        <begin position="189"/>
        <end position="192"/>
    </location>
</feature>
<feature type="strand" evidence="7">
    <location>
        <begin position="197"/>
        <end position="201"/>
    </location>
</feature>
<feature type="strand" evidence="7">
    <location>
        <begin position="205"/>
        <end position="211"/>
    </location>
</feature>
<feature type="strand" evidence="7">
    <location>
        <begin position="213"/>
        <end position="216"/>
    </location>
</feature>
<feature type="strand" evidence="7">
    <location>
        <begin position="221"/>
        <end position="225"/>
    </location>
</feature>
<feature type="strand" evidence="8">
    <location>
        <begin position="228"/>
        <end position="230"/>
    </location>
</feature>
<feature type="strand" evidence="7">
    <location>
        <begin position="235"/>
        <end position="241"/>
    </location>
</feature>
<feature type="strand" evidence="7">
    <location>
        <begin position="243"/>
        <end position="246"/>
    </location>
</feature>
<feature type="strand" evidence="7">
    <location>
        <begin position="251"/>
        <end position="264"/>
    </location>
</feature>
<feature type="strand" evidence="7">
    <location>
        <begin position="266"/>
        <end position="269"/>
    </location>
</feature>
<feature type="strand" evidence="7">
    <location>
        <begin position="274"/>
        <end position="287"/>
    </location>
</feature>
<feature type="strand" evidence="7">
    <location>
        <begin position="289"/>
        <end position="292"/>
    </location>
</feature>
<feature type="strand" evidence="7">
    <location>
        <begin position="295"/>
        <end position="298"/>
    </location>
</feature>
<feature type="strand" evidence="7">
    <location>
        <begin position="301"/>
        <end position="305"/>
    </location>
</feature>
<feature type="strand" evidence="7">
    <location>
        <begin position="312"/>
        <end position="314"/>
    </location>
</feature>
<feature type="strand" evidence="7">
    <location>
        <begin position="324"/>
        <end position="327"/>
    </location>
</feature>
<feature type="strand" evidence="7">
    <location>
        <begin position="329"/>
        <end position="331"/>
    </location>
</feature>
<feature type="strand" evidence="7">
    <location>
        <begin position="338"/>
        <end position="342"/>
    </location>
</feature>
<feature type="strand" evidence="7">
    <location>
        <begin position="344"/>
        <end position="346"/>
    </location>
</feature>
<feature type="strand" evidence="7">
    <location>
        <begin position="351"/>
        <end position="354"/>
    </location>
</feature>
<feature type="strand" evidence="7">
    <location>
        <begin position="356"/>
        <end position="365"/>
    </location>
</feature>
<feature type="strand" evidence="7">
    <location>
        <begin position="372"/>
        <end position="374"/>
    </location>
</feature>
<feature type="strand" evidence="6">
    <location>
        <begin position="393"/>
        <end position="398"/>
    </location>
</feature>
<feature type="strand" evidence="6">
    <location>
        <begin position="401"/>
        <end position="403"/>
    </location>
</feature>
<feature type="strand" evidence="6">
    <location>
        <begin position="406"/>
        <end position="408"/>
    </location>
</feature>
<feature type="strand" evidence="6">
    <location>
        <begin position="411"/>
        <end position="417"/>
    </location>
</feature>
<feature type="strand" evidence="6">
    <location>
        <begin position="419"/>
        <end position="421"/>
    </location>
</feature>
<feature type="strand" evidence="6">
    <location>
        <begin position="424"/>
        <end position="426"/>
    </location>
</feature>
<feature type="strand" evidence="6">
    <location>
        <begin position="428"/>
        <end position="434"/>
    </location>
</feature>
<feature type="strand" evidence="6">
    <location>
        <begin position="437"/>
        <end position="439"/>
    </location>
</feature>
<feature type="strand" evidence="6">
    <location>
        <begin position="442"/>
        <end position="444"/>
    </location>
</feature>
<feature type="strand" evidence="6">
    <location>
        <begin position="457"/>
        <end position="461"/>
    </location>
</feature>
<feature type="turn" evidence="6">
    <location>
        <begin position="463"/>
        <end position="465"/>
    </location>
</feature>
<feature type="strand" evidence="6">
    <location>
        <begin position="467"/>
        <end position="469"/>
    </location>
</feature>
<feature type="strand" evidence="6">
    <location>
        <begin position="471"/>
        <end position="474"/>
    </location>
</feature>
<feature type="strand" evidence="6">
    <location>
        <begin position="479"/>
        <end position="482"/>
    </location>
</feature>
<feature type="strand" evidence="6">
    <location>
        <begin position="486"/>
        <end position="490"/>
    </location>
</feature>
<feature type="strand" evidence="6">
    <location>
        <begin position="494"/>
        <end position="502"/>
    </location>
</feature>
<feature type="turn" evidence="6">
    <location>
        <begin position="506"/>
        <end position="508"/>
    </location>
</feature>
<feature type="strand" evidence="6">
    <location>
        <begin position="514"/>
        <end position="519"/>
    </location>
</feature>
<feature type="turn" evidence="6">
    <location>
        <begin position="525"/>
        <end position="527"/>
    </location>
</feature>
<feature type="strand" evidence="6">
    <location>
        <begin position="542"/>
        <end position="544"/>
    </location>
</feature>
<reference key="1">
    <citation type="journal article" date="1995" name="Mol. Microbiol.">
        <title>A family of modular type mannuronan C-5-epimerase genes controls alginate structure in Azotobacter vinelandii.</title>
        <authorList>
            <person name="Ertesvaag H."/>
            <person name="Hoeidal H.K."/>
            <person name="Hals I.K."/>
            <person name="Rian A."/>
            <person name="Doseth B."/>
            <person name="Valla S."/>
        </authorList>
    </citation>
    <scope>NUCLEOTIDE SEQUENCE [GENOMIC DNA]</scope>
    <source>
        <strain>E</strain>
    </source>
</reference>
<reference key="2">
    <citation type="journal article" date="1999" name="J. Biol. Chem.">
        <title>The recombinant Azotobacter vinelandii mannuronan C-5-epimerase AlgE4 epimerizes alginate by a nonrandom attack mechanism.</title>
        <authorList>
            <person name="Hoeidal H.K."/>
            <person name="Ertesvaag H."/>
            <person name="Skjaak-Braek G."/>
            <person name="Stokke B.T."/>
            <person name="Valla S."/>
        </authorList>
    </citation>
    <scope>FUNCTION</scope>
    <scope>CATALYTIC ACTIVITY</scope>
    <scope>COFACTOR</scope>
    <scope>ACTIVITY REGULATION</scope>
    <scope>BIOPHYSICOCHEMICAL PROPERTIES</scope>
    <source>
        <strain>E</strain>
    </source>
</reference>
<reference key="3">
    <citation type="journal article" date="2000" name="Environ. Microbiol.">
        <title>Mannuronan C-5 epimerases and cellular differentiation of Azotobacter vinelandii.</title>
        <authorList>
            <person name="Hoeidal H.K."/>
            <person name="Glaerum Svanem B.I."/>
            <person name="Gimmestad M."/>
            <person name="Valla S."/>
        </authorList>
    </citation>
    <scope>EXPRESSION</scope>
    <source>
        <strain>E</strain>
    </source>
</reference>
<reference key="4">
    <citation type="journal article" date="1999" name="Metab. Eng.">
        <title>Mannuronan C-5-epimerases and their application for in vitro and in vivo design of new alginates useful in biotechnology.</title>
        <authorList>
            <person name="Ertesvaag H."/>
            <person name="Hoeidal H.K."/>
            <person name="Schjerven H."/>
            <person name="Glaerum Svanem B.I."/>
            <person name="Valla S."/>
        </authorList>
    </citation>
    <scope>REVIEW</scope>
</reference>
<evidence type="ECO:0000255" key="1"/>
<evidence type="ECO:0000256" key="2">
    <source>
        <dbReference type="SAM" id="MobiDB-lite"/>
    </source>
</evidence>
<evidence type="ECO:0000269" key="3">
    <source>
    </source>
</evidence>
<evidence type="ECO:0000303" key="4">
    <source>
    </source>
</evidence>
<evidence type="ECO:0000305" key="5"/>
<evidence type="ECO:0007829" key="6">
    <source>
        <dbReference type="PDB" id="2AGM"/>
    </source>
</evidence>
<evidence type="ECO:0007829" key="7">
    <source>
        <dbReference type="PDB" id="2PYG"/>
    </source>
</evidence>
<evidence type="ECO:0007829" key="8">
    <source>
        <dbReference type="PDB" id="2PYH"/>
    </source>
</evidence>
<comment type="function">
    <text evidence="3">Converts beta-D-mannuronic acid (M) to alpha-L-guluronic acid (G), but introduces almost exclusively MG blocks, producing a polymer with non-gel-forming capacity.</text>
</comment>
<comment type="catalytic activity">
    <reaction evidence="3">
        <text>[(1-&gt;4)-beta-D-mannuronosyl](n) = [alginate](n)</text>
        <dbReference type="Rhea" id="RHEA:45572"/>
        <dbReference type="Rhea" id="RHEA-COMP:11264"/>
        <dbReference type="Rhea" id="RHEA-COMP:11270"/>
        <dbReference type="ChEBI" id="CHEBI:58187"/>
        <dbReference type="ChEBI" id="CHEBI:85311"/>
        <dbReference type="EC" id="5.1.3.37"/>
    </reaction>
</comment>
<comment type="cofactor">
    <cofactor evidence="3">
        <name>Ca(2+)</name>
        <dbReference type="ChEBI" id="CHEBI:29108"/>
    </cofactor>
</comment>
<comment type="activity regulation">
    <text evidence="3">Inhibited by zinc.</text>
</comment>
<comment type="biophysicochemical properties">
    <kinetics>
        <Vmax evidence="3">14.8 umol/min/mg enzyme</Vmax>
        <text evidence="3">kcat is 14 sec(-1).</text>
    </kinetics>
    <phDependence>
        <text evidence="3">Optimum pH is 6.5-7.0.</text>
    </phDependence>
    <temperatureDependence>
        <text evidence="3">Optimum temperature is 37 degrees Celsius.</text>
    </temperatureDependence>
</comment>
<comment type="pathway">
    <text evidence="5">Glycan biosynthesis; alginate biosynthesis.</text>
</comment>
<comment type="subcellular location">
    <subcellularLocation>
        <location>Secreted</location>
    </subcellularLocation>
    <text>Probably exported via the hemolysin-type secretion pathway.</text>
</comment>
<comment type="developmental stage">
    <text>Produced in encysting cells.</text>
</comment>
<comment type="domain">
    <text>Composed of one catalytically active A module and one R module.</text>
</comment>
<comment type="miscellaneous">
    <text>Each enzyme of this family of C5 epimerases introduces its own characteristic sequence distribution of G-blocks in their substrates, explaining the extensive sequence variability of alginates. These alginates of varying composition have different physical properties and are necessary at different stages of the bacterium life cycle.</text>
</comment>
<comment type="similarity">
    <text evidence="5">Belongs to the D-mannuronate C5-epimerase family.</text>
</comment>
<organism>
    <name type="scientific">Azotobacter vinelandii</name>
    <dbReference type="NCBI Taxonomy" id="354"/>
    <lineage>
        <taxon>Bacteria</taxon>
        <taxon>Pseudomonadati</taxon>
        <taxon>Pseudomonadota</taxon>
        <taxon>Gammaproteobacteria</taxon>
        <taxon>Pseudomonadales</taxon>
        <taxon>Pseudomonadaceae</taxon>
        <taxon>Azotobacter</taxon>
    </lineage>
</organism>